<accession>A7ZJV2</accession>
<dbReference type="EC" id="2.3.2.6" evidence="1"/>
<dbReference type="EMBL" id="CP000800">
    <property type="protein sequence ID" value="ABV19489.1"/>
    <property type="molecule type" value="Genomic_DNA"/>
</dbReference>
<dbReference type="RefSeq" id="WP_001241678.1">
    <property type="nucleotide sequence ID" value="NC_009801.1"/>
</dbReference>
<dbReference type="SMR" id="A7ZJV2"/>
<dbReference type="GeneID" id="75206174"/>
<dbReference type="KEGG" id="ecw:EcE24377A_0958"/>
<dbReference type="HOGENOM" id="CLU_075045_0_0_6"/>
<dbReference type="Proteomes" id="UP000001122">
    <property type="component" value="Chromosome"/>
</dbReference>
<dbReference type="GO" id="GO:0005737">
    <property type="term" value="C:cytoplasm"/>
    <property type="evidence" value="ECO:0007669"/>
    <property type="project" value="UniProtKB-SubCell"/>
</dbReference>
<dbReference type="GO" id="GO:0008914">
    <property type="term" value="F:leucyl-tRNA--protein transferase activity"/>
    <property type="evidence" value="ECO:0007669"/>
    <property type="project" value="UniProtKB-UniRule"/>
</dbReference>
<dbReference type="GO" id="GO:0030163">
    <property type="term" value="P:protein catabolic process"/>
    <property type="evidence" value="ECO:0007669"/>
    <property type="project" value="UniProtKB-UniRule"/>
</dbReference>
<dbReference type="FunFam" id="3.30.70.3550:FF:000001">
    <property type="entry name" value="Leucyl/phenylalanyl-tRNA--protein transferase"/>
    <property type="match status" value="1"/>
</dbReference>
<dbReference type="FunFam" id="3.40.630.70:FF:000001">
    <property type="entry name" value="Leucyl/phenylalanyl-tRNA--protein transferase"/>
    <property type="match status" value="1"/>
</dbReference>
<dbReference type="Gene3D" id="3.40.630.70">
    <property type="entry name" value="Leucyl/phenylalanyl-tRNA-protein transferase, C-terminal domain"/>
    <property type="match status" value="1"/>
</dbReference>
<dbReference type="Gene3D" id="3.30.70.3550">
    <property type="entry name" value="Leucyl/phenylalanyl-tRNA-protein transferase, N-terminal domain"/>
    <property type="match status" value="1"/>
</dbReference>
<dbReference type="HAMAP" id="MF_00688">
    <property type="entry name" value="Leu_Phe_trans"/>
    <property type="match status" value="1"/>
</dbReference>
<dbReference type="InterPro" id="IPR016181">
    <property type="entry name" value="Acyl_CoA_acyltransferase"/>
</dbReference>
<dbReference type="InterPro" id="IPR004616">
    <property type="entry name" value="Leu/Phe-tRNA_Trfase"/>
</dbReference>
<dbReference type="InterPro" id="IPR042203">
    <property type="entry name" value="Leu/Phe-tRNA_Trfase_C"/>
</dbReference>
<dbReference type="InterPro" id="IPR042221">
    <property type="entry name" value="Leu/Phe-tRNA_Trfase_N"/>
</dbReference>
<dbReference type="NCBIfam" id="TIGR00667">
    <property type="entry name" value="aat"/>
    <property type="match status" value="1"/>
</dbReference>
<dbReference type="PANTHER" id="PTHR30098">
    <property type="entry name" value="LEUCYL/PHENYLALANYL-TRNA--PROTEIN TRANSFERASE"/>
    <property type="match status" value="1"/>
</dbReference>
<dbReference type="PANTHER" id="PTHR30098:SF2">
    <property type="entry name" value="LEUCYL_PHENYLALANYL-TRNA--PROTEIN TRANSFERASE"/>
    <property type="match status" value="1"/>
</dbReference>
<dbReference type="Pfam" id="PF03588">
    <property type="entry name" value="Leu_Phe_trans"/>
    <property type="match status" value="1"/>
</dbReference>
<dbReference type="SUPFAM" id="SSF55729">
    <property type="entry name" value="Acyl-CoA N-acyltransferases (Nat)"/>
    <property type="match status" value="1"/>
</dbReference>
<proteinExistence type="inferred from homology"/>
<gene>
    <name evidence="1" type="primary">aat</name>
    <name type="ordered locus">EcE24377A_0958</name>
</gene>
<reference key="1">
    <citation type="journal article" date="2008" name="J. Bacteriol.">
        <title>The pangenome structure of Escherichia coli: comparative genomic analysis of E. coli commensal and pathogenic isolates.</title>
        <authorList>
            <person name="Rasko D.A."/>
            <person name="Rosovitz M.J."/>
            <person name="Myers G.S.A."/>
            <person name="Mongodin E.F."/>
            <person name="Fricke W.F."/>
            <person name="Gajer P."/>
            <person name="Crabtree J."/>
            <person name="Sebaihia M."/>
            <person name="Thomson N.R."/>
            <person name="Chaudhuri R."/>
            <person name="Henderson I.R."/>
            <person name="Sperandio V."/>
            <person name="Ravel J."/>
        </authorList>
    </citation>
    <scope>NUCLEOTIDE SEQUENCE [LARGE SCALE GENOMIC DNA]</scope>
    <source>
        <strain>E24377A / ETEC</strain>
    </source>
</reference>
<protein>
    <recommendedName>
        <fullName evidence="1">Leucyl/phenylalanyl-tRNA--protein transferase</fullName>
        <ecNumber evidence="1">2.3.2.6</ecNumber>
    </recommendedName>
    <alternativeName>
        <fullName evidence="1">L/F-transferase</fullName>
    </alternativeName>
    <alternativeName>
        <fullName evidence="1">Leucyltransferase</fullName>
    </alternativeName>
    <alternativeName>
        <fullName evidence="1">Phenyalanyltransferase</fullName>
    </alternativeName>
</protein>
<keyword id="KW-0012">Acyltransferase</keyword>
<keyword id="KW-0963">Cytoplasm</keyword>
<keyword id="KW-1185">Reference proteome</keyword>
<keyword id="KW-0808">Transferase</keyword>
<sequence length="234" mass="26619">MRLVQLSRHSIAFPSPEGALREPNGLLALGGDLSPARLLMAYQRGIFPWFSPGDPILWWSPDPRAVLWPESLHISRSMKRFHKRSPYRVTMNYAFGQVIEGCASDREEGTWITRGVVEAYHRLHELGHAHSIEVWREDELVGGMYGVAQGTLFCGESMFSRMENASKTALLVFCEEFIGHGGKLIDCQVLNDHTASLGACEIPRRDYLNYLNQMRLGRLPNNFWVPRCLFSPQE</sequence>
<organism>
    <name type="scientific">Escherichia coli O139:H28 (strain E24377A / ETEC)</name>
    <dbReference type="NCBI Taxonomy" id="331111"/>
    <lineage>
        <taxon>Bacteria</taxon>
        <taxon>Pseudomonadati</taxon>
        <taxon>Pseudomonadota</taxon>
        <taxon>Gammaproteobacteria</taxon>
        <taxon>Enterobacterales</taxon>
        <taxon>Enterobacteriaceae</taxon>
        <taxon>Escherichia</taxon>
    </lineage>
</organism>
<comment type="function">
    <text evidence="1">Functions in the N-end rule pathway of protein degradation where it conjugates Leu, Phe and, less efficiently, Met from aminoacyl-tRNAs to the N-termini of proteins containing an N-terminal arginine or lysine.</text>
</comment>
<comment type="catalytic activity">
    <reaction evidence="1">
        <text>N-terminal L-lysyl-[protein] + L-leucyl-tRNA(Leu) = N-terminal L-leucyl-L-lysyl-[protein] + tRNA(Leu) + H(+)</text>
        <dbReference type="Rhea" id="RHEA:12340"/>
        <dbReference type="Rhea" id="RHEA-COMP:9613"/>
        <dbReference type="Rhea" id="RHEA-COMP:9622"/>
        <dbReference type="Rhea" id="RHEA-COMP:12670"/>
        <dbReference type="Rhea" id="RHEA-COMP:12671"/>
        <dbReference type="ChEBI" id="CHEBI:15378"/>
        <dbReference type="ChEBI" id="CHEBI:65249"/>
        <dbReference type="ChEBI" id="CHEBI:78442"/>
        <dbReference type="ChEBI" id="CHEBI:78494"/>
        <dbReference type="ChEBI" id="CHEBI:133043"/>
        <dbReference type="EC" id="2.3.2.6"/>
    </reaction>
</comment>
<comment type="catalytic activity">
    <reaction evidence="1">
        <text>N-terminal L-arginyl-[protein] + L-leucyl-tRNA(Leu) = N-terminal L-leucyl-L-arginyl-[protein] + tRNA(Leu) + H(+)</text>
        <dbReference type="Rhea" id="RHEA:50416"/>
        <dbReference type="Rhea" id="RHEA-COMP:9613"/>
        <dbReference type="Rhea" id="RHEA-COMP:9622"/>
        <dbReference type="Rhea" id="RHEA-COMP:12672"/>
        <dbReference type="Rhea" id="RHEA-COMP:12673"/>
        <dbReference type="ChEBI" id="CHEBI:15378"/>
        <dbReference type="ChEBI" id="CHEBI:64719"/>
        <dbReference type="ChEBI" id="CHEBI:78442"/>
        <dbReference type="ChEBI" id="CHEBI:78494"/>
        <dbReference type="ChEBI" id="CHEBI:133044"/>
        <dbReference type="EC" id="2.3.2.6"/>
    </reaction>
</comment>
<comment type="catalytic activity">
    <reaction evidence="1">
        <text>L-phenylalanyl-tRNA(Phe) + an N-terminal L-alpha-aminoacyl-[protein] = an N-terminal L-phenylalanyl-L-alpha-aminoacyl-[protein] + tRNA(Phe)</text>
        <dbReference type="Rhea" id="RHEA:43632"/>
        <dbReference type="Rhea" id="RHEA-COMP:9668"/>
        <dbReference type="Rhea" id="RHEA-COMP:9699"/>
        <dbReference type="Rhea" id="RHEA-COMP:10636"/>
        <dbReference type="Rhea" id="RHEA-COMP:10637"/>
        <dbReference type="ChEBI" id="CHEBI:78442"/>
        <dbReference type="ChEBI" id="CHEBI:78531"/>
        <dbReference type="ChEBI" id="CHEBI:78597"/>
        <dbReference type="ChEBI" id="CHEBI:83561"/>
        <dbReference type="EC" id="2.3.2.6"/>
    </reaction>
</comment>
<comment type="subcellular location">
    <subcellularLocation>
        <location evidence="1">Cytoplasm</location>
    </subcellularLocation>
</comment>
<comment type="similarity">
    <text evidence="1">Belongs to the L/F-transferase family.</text>
</comment>
<feature type="chain" id="PRO_1000062004" description="Leucyl/phenylalanyl-tRNA--protein transferase">
    <location>
        <begin position="1"/>
        <end position="234"/>
    </location>
</feature>
<evidence type="ECO:0000255" key="1">
    <source>
        <dbReference type="HAMAP-Rule" id="MF_00688"/>
    </source>
</evidence>
<name>LFTR_ECO24</name>